<proteinExistence type="predicted"/>
<protein>
    <recommendedName>
        <fullName>Nodulation protein NolW</fullName>
    </recommendedName>
</protein>
<reference key="1">
    <citation type="journal article" date="1993" name="Mol. Microbiol.">
        <title>Molecular cloning and characterization of a sym plasmid locus that regulates cultivar-specific nodulation of soybean by Rhizobium fredii USDA257.</title>
        <authorList>
            <person name="Meinhardt L.W."/>
            <person name="Krishnan H.B."/>
            <person name="Balatti P.A."/>
            <person name="Pueppke S.G."/>
        </authorList>
    </citation>
    <scope>NUCLEOTIDE SEQUENCE [GENOMIC DNA]</scope>
    <source>
        <strain>USDA 257</strain>
    </source>
</reference>
<accession>P33212</accession>
<name>NOLW_RHIFR</name>
<geneLocation type="plasmid">
    <name>sym</name>
</geneLocation>
<dbReference type="EMBL" id="L12251">
    <property type="protein sequence ID" value="AAB17675.1"/>
    <property type="molecule type" value="Genomic_DNA"/>
</dbReference>
<dbReference type="PIR" id="S35020">
    <property type="entry name" value="S35020"/>
</dbReference>
<dbReference type="SMR" id="P33212"/>
<dbReference type="GO" id="GO:0016020">
    <property type="term" value="C:membrane"/>
    <property type="evidence" value="ECO:0007669"/>
    <property type="project" value="UniProtKB-SubCell"/>
</dbReference>
<dbReference type="Gene3D" id="3.30.1370.120">
    <property type="match status" value="1"/>
</dbReference>
<dbReference type="Gene3D" id="3.55.50.30">
    <property type="match status" value="1"/>
</dbReference>
<dbReference type="InterPro" id="IPR005644">
    <property type="entry name" value="NolW-like"/>
</dbReference>
<dbReference type="InterPro" id="IPR038591">
    <property type="entry name" value="NolW-like_sf"/>
</dbReference>
<dbReference type="Pfam" id="PF03958">
    <property type="entry name" value="Secretin_N"/>
    <property type="match status" value="1"/>
</dbReference>
<evidence type="ECO:0000255" key="1"/>
<evidence type="ECO:0000305" key="2"/>
<comment type="function">
    <text>Regulates cultivar-specific nodulation of soybean.</text>
</comment>
<comment type="subcellular location">
    <subcellularLocation>
        <location evidence="2">Membrane</location>
        <topology evidence="2">Single-pass membrane protein</topology>
    </subcellularLocation>
</comment>
<sequence>MPTTPIPFTPLHMFRRLLCVGLFLFAGIHTTLGATLPLPSTSYKYTVLDQDLSAALQEFGNNLKISVNISAEVKGRIRGRIPELSPREFLDRLTDLYDLQWYYDGVVLYVSAAKEAQTRMLVLSSVHFSAFKLALDKLDISDERYPVRPAPGNGLVLVSGPPRFIALIEQTLNGLLAVAQAQPRATDTPARESVMVLFRGSSTTVVRGGRPEVFYTSEMLPENDDGGKAELSKK</sequence>
<organism>
    <name type="scientific">Rhizobium fredii</name>
    <name type="common">Sinorhizobium fredii</name>
    <dbReference type="NCBI Taxonomy" id="380"/>
    <lineage>
        <taxon>Bacteria</taxon>
        <taxon>Pseudomonadati</taxon>
        <taxon>Pseudomonadota</taxon>
        <taxon>Alphaproteobacteria</taxon>
        <taxon>Hyphomicrobiales</taxon>
        <taxon>Rhizobiaceae</taxon>
        <taxon>Sinorhizobium/Ensifer group</taxon>
        <taxon>Sinorhizobium</taxon>
    </lineage>
</organism>
<gene>
    <name type="primary">nolW</name>
</gene>
<feature type="chain" id="PRO_0000209454" description="Nodulation protein NolW">
    <location>
        <begin position="1"/>
        <end position="234"/>
    </location>
</feature>
<feature type="transmembrane region" description="Helical" evidence="1">
    <location>
        <begin position="17"/>
        <end position="36"/>
    </location>
</feature>
<keyword id="KW-0472">Membrane</keyword>
<keyword id="KW-0536">Nodulation</keyword>
<keyword id="KW-0614">Plasmid</keyword>
<keyword id="KW-0812">Transmembrane</keyword>
<keyword id="KW-1133">Transmembrane helix</keyword>